<evidence type="ECO:0000255" key="1">
    <source>
        <dbReference type="HAMAP-Rule" id="MF_00439"/>
    </source>
</evidence>
<evidence type="ECO:0000305" key="2"/>
<dbReference type="EMBL" id="AY958086">
    <property type="protein sequence ID" value="AAX45879.1"/>
    <property type="status" value="ALT_INIT"/>
    <property type="molecule type" value="Genomic_DNA"/>
</dbReference>
<dbReference type="RefSeq" id="YP_636512.2">
    <property type="nucleotide sequence ID" value="NC_008117.1"/>
</dbReference>
<dbReference type="SMR" id="Q32RL4"/>
<dbReference type="GeneID" id="4108199"/>
<dbReference type="GO" id="GO:0009535">
    <property type="term" value="C:chloroplast thylakoid membrane"/>
    <property type="evidence" value="ECO:0007669"/>
    <property type="project" value="UniProtKB-SubCell"/>
</dbReference>
<dbReference type="GO" id="GO:0015979">
    <property type="term" value="P:photosynthesis"/>
    <property type="evidence" value="ECO:0007669"/>
    <property type="project" value="UniProtKB-UniRule"/>
</dbReference>
<dbReference type="FunFam" id="1.25.40.10:FF:000004">
    <property type="entry name" value="Photosystem I assembly protein Ycf3"/>
    <property type="match status" value="1"/>
</dbReference>
<dbReference type="Gene3D" id="1.25.40.10">
    <property type="entry name" value="Tetratricopeptide repeat domain"/>
    <property type="match status" value="1"/>
</dbReference>
<dbReference type="HAMAP" id="MF_00439">
    <property type="entry name" value="Ycf3"/>
    <property type="match status" value="1"/>
</dbReference>
<dbReference type="InterPro" id="IPR022818">
    <property type="entry name" value="PSI_Ycf3_assembly"/>
</dbReference>
<dbReference type="InterPro" id="IPR011990">
    <property type="entry name" value="TPR-like_helical_dom_sf"/>
</dbReference>
<dbReference type="InterPro" id="IPR019734">
    <property type="entry name" value="TPR_rpt"/>
</dbReference>
<dbReference type="InterPro" id="IPR051685">
    <property type="entry name" value="Ycf3/AcsC/BcsC/TPR_MFPF"/>
</dbReference>
<dbReference type="NCBIfam" id="NF002725">
    <property type="entry name" value="PRK02603.1"/>
    <property type="match status" value="1"/>
</dbReference>
<dbReference type="PANTHER" id="PTHR44943">
    <property type="entry name" value="CELLULOSE SYNTHASE OPERON PROTEIN C"/>
    <property type="match status" value="1"/>
</dbReference>
<dbReference type="PANTHER" id="PTHR44943:SF8">
    <property type="entry name" value="TPR REPEAT-CONTAINING PROTEIN MJ0263"/>
    <property type="match status" value="1"/>
</dbReference>
<dbReference type="Pfam" id="PF00515">
    <property type="entry name" value="TPR_1"/>
    <property type="match status" value="1"/>
</dbReference>
<dbReference type="SMART" id="SM00028">
    <property type="entry name" value="TPR"/>
    <property type="match status" value="3"/>
</dbReference>
<dbReference type="SUPFAM" id="SSF48452">
    <property type="entry name" value="TPR-like"/>
    <property type="match status" value="1"/>
</dbReference>
<dbReference type="PROSITE" id="PS50005">
    <property type="entry name" value="TPR"/>
    <property type="match status" value="3"/>
</dbReference>
<dbReference type="PROSITE" id="PS50293">
    <property type="entry name" value="TPR_REGION"/>
    <property type="match status" value="1"/>
</dbReference>
<geneLocation type="chloroplast"/>
<gene>
    <name evidence="1" type="primary">ycf3</name>
</gene>
<name>YCF3_ZYGCR</name>
<protein>
    <recommendedName>
        <fullName evidence="1">Photosystem I assembly protein Ycf3</fullName>
    </recommendedName>
</protein>
<proteinExistence type="inferred from homology"/>
<accession>Q32RL4</accession>
<organism>
    <name type="scientific">Zygnema circumcarinatum</name>
    <name type="common">Green alga</name>
    <dbReference type="NCBI Taxonomy" id="35869"/>
    <lineage>
        <taxon>Eukaryota</taxon>
        <taxon>Viridiplantae</taxon>
        <taxon>Streptophyta</taxon>
        <taxon>Zygnematophyceae</taxon>
        <taxon>Zygnematophycidae</taxon>
        <taxon>Zygnematales</taxon>
        <taxon>Zygnemataceae</taxon>
        <taxon>Zygnema</taxon>
    </lineage>
</organism>
<reference key="1">
    <citation type="journal article" date="2005" name="BMC Biol.">
        <title>The complete chloroplast DNA sequences of the charophycean green algae Staurastrum and Zygnema reveal that the chloroplast genome underwent extensive changes during the evolution of the Zygnematales.</title>
        <authorList>
            <person name="Turmel M."/>
            <person name="Otis C."/>
            <person name="Lemieux C."/>
        </authorList>
    </citation>
    <scope>NUCLEOTIDE SEQUENCE [LARGE SCALE GENOMIC DNA]</scope>
</reference>
<feature type="chain" id="PRO_0000275643" description="Photosystem I assembly protein Ycf3">
    <location>
        <begin position="1"/>
        <end position="167"/>
    </location>
</feature>
<feature type="repeat" description="TPR 1">
    <location>
        <begin position="35"/>
        <end position="68"/>
    </location>
</feature>
<feature type="repeat" description="TPR 2">
    <location>
        <begin position="72"/>
        <end position="105"/>
    </location>
</feature>
<feature type="repeat" description="TPR 3">
    <location>
        <begin position="120"/>
        <end position="153"/>
    </location>
</feature>
<sequence length="167" mass="19575">MPRSQRNDNFIDKTFTIVADILLRVIPTTQREKEAFTYYRDGMSAQSEGEYAEALQNYYEAMRLEIDPYDRSYILYNIGLIHTSNGEHAKAIEYYLQALERNPSLPQAFNNMAVICHYRGEQAVEKEDLETSEAWFDQAADYWKQAIALAPNNYIEAQNWLKNTRRL</sequence>
<keyword id="KW-0150">Chloroplast</keyword>
<keyword id="KW-0472">Membrane</keyword>
<keyword id="KW-0602">Photosynthesis</keyword>
<keyword id="KW-0934">Plastid</keyword>
<keyword id="KW-0677">Repeat</keyword>
<keyword id="KW-0793">Thylakoid</keyword>
<keyword id="KW-0802">TPR repeat</keyword>
<comment type="function">
    <text evidence="1">Essential for the assembly of the photosystem I (PSI) complex. May act as a chaperone-like factor to guide the assembly of the PSI subunits.</text>
</comment>
<comment type="subcellular location">
    <subcellularLocation>
        <location evidence="1">Plastid</location>
        <location evidence="1">Chloroplast thylakoid membrane</location>
        <topology evidence="1">Peripheral membrane protein</topology>
    </subcellularLocation>
</comment>
<comment type="similarity">
    <text evidence="1">Belongs to the Ycf3 family.</text>
</comment>
<comment type="sequence caution" evidence="2">
    <conflict type="erroneous initiation">
        <sequence resource="EMBL-CDS" id="AAX45879"/>
    </conflict>
</comment>